<accession>B0RU57</accession>
<reference key="1">
    <citation type="journal article" date="2008" name="J. Biotechnol.">
        <title>The genome of Xanthomonas campestris pv. campestris B100 and its use for the reconstruction of metabolic pathways involved in xanthan biosynthesis.</title>
        <authorList>
            <person name="Vorhoelter F.-J."/>
            <person name="Schneiker S."/>
            <person name="Goesmann A."/>
            <person name="Krause L."/>
            <person name="Bekel T."/>
            <person name="Kaiser O."/>
            <person name="Linke B."/>
            <person name="Patschkowski T."/>
            <person name="Rueckert C."/>
            <person name="Schmid J."/>
            <person name="Sidhu V.K."/>
            <person name="Sieber V."/>
            <person name="Tauch A."/>
            <person name="Watt S.A."/>
            <person name="Weisshaar B."/>
            <person name="Becker A."/>
            <person name="Niehaus K."/>
            <person name="Puehler A."/>
        </authorList>
    </citation>
    <scope>NUCLEOTIDE SEQUENCE [LARGE SCALE GENOMIC DNA]</scope>
    <source>
        <strain>B100</strain>
    </source>
</reference>
<sequence length="127" mass="14333">MRHQKSGRKFNRTSAHREAMFRNMAASLFKHELIKTTLPKAKELRRVAEPLITIGKVDGVANRRLAFARLRDKEAVGKLFVELGPRYATRPGGYLRILKAGFRAGDNAPMAYVELVDRPVVAEEVSE</sequence>
<dbReference type="EMBL" id="AM920689">
    <property type="protein sequence ID" value="CAP52799.1"/>
    <property type="molecule type" value="Genomic_DNA"/>
</dbReference>
<dbReference type="SMR" id="B0RU57"/>
<dbReference type="KEGG" id="xca:xcc-b100_3434"/>
<dbReference type="HOGENOM" id="CLU_074407_2_0_6"/>
<dbReference type="Proteomes" id="UP000001188">
    <property type="component" value="Chromosome"/>
</dbReference>
<dbReference type="GO" id="GO:0022625">
    <property type="term" value="C:cytosolic large ribosomal subunit"/>
    <property type="evidence" value="ECO:0007669"/>
    <property type="project" value="TreeGrafter"/>
</dbReference>
<dbReference type="GO" id="GO:0003735">
    <property type="term" value="F:structural constituent of ribosome"/>
    <property type="evidence" value="ECO:0007669"/>
    <property type="project" value="InterPro"/>
</dbReference>
<dbReference type="GO" id="GO:0006412">
    <property type="term" value="P:translation"/>
    <property type="evidence" value="ECO:0007669"/>
    <property type="project" value="UniProtKB-UniRule"/>
</dbReference>
<dbReference type="FunFam" id="3.90.1030.10:FF:000001">
    <property type="entry name" value="50S ribosomal protein L17"/>
    <property type="match status" value="1"/>
</dbReference>
<dbReference type="Gene3D" id="3.90.1030.10">
    <property type="entry name" value="Ribosomal protein L17"/>
    <property type="match status" value="1"/>
</dbReference>
<dbReference type="HAMAP" id="MF_01368">
    <property type="entry name" value="Ribosomal_bL17"/>
    <property type="match status" value="1"/>
</dbReference>
<dbReference type="InterPro" id="IPR000456">
    <property type="entry name" value="Ribosomal_bL17"/>
</dbReference>
<dbReference type="InterPro" id="IPR047859">
    <property type="entry name" value="Ribosomal_bL17_CS"/>
</dbReference>
<dbReference type="InterPro" id="IPR036373">
    <property type="entry name" value="Ribosomal_bL17_sf"/>
</dbReference>
<dbReference type="NCBIfam" id="TIGR00059">
    <property type="entry name" value="L17"/>
    <property type="match status" value="1"/>
</dbReference>
<dbReference type="PANTHER" id="PTHR14413:SF16">
    <property type="entry name" value="LARGE RIBOSOMAL SUBUNIT PROTEIN BL17M"/>
    <property type="match status" value="1"/>
</dbReference>
<dbReference type="PANTHER" id="PTHR14413">
    <property type="entry name" value="RIBOSOMAL PROTEIN L17"/>
    <property type="match status" value="1"/>
</dbReference>
<dbReference type="Pfam" id="PF01196">
    <property type="entry name" value="Ribosomal_L17"/>
    <property type="match status" value="1"/>
</dbReference>
<dbReference type="SUPFAM" id="SSF64263">
    <property type="entry name" value="Prokaryotic ribosomal protein L17"/>
    <property type="match status" value="1"/>
</dbReference>
<dbReference type="PROSITE" id="PS01167">
    <property type="entry name" value="RIBOSOMAL_L17"/>
    <property type="match status" value="1"/>
</dbReference>
<evidence type="ECO:0000255" key="1">
    <source>
        <dbReference type="HAMAP-Rule" id="MF_01368"/>
    </source>
</evidence>
<evidence type="ECO:0000305" key="2"/>
<proteinExistence type="inferred from homology"/>
<gene>
    <name evidence="1" type="primary">rplQ</name>
    <name type="ordered locus">xcc-b100_3434</name>
</gene>
<organism>
    <name type="scientific">Xanthomonas campestris pv. campestris (strain B100)</name>
    <dbReference type="NCBI Taxonomy" id="509169"/>
    <lineage>
        <taxon>Bacteria</taxon>
        <taxon>Pseudomonadati</taxon>
        <taxon>Pseudomonadota</taxon>
        <taxon>Gammaproteobacteria</taxon>
        <taxon>Lysobacterales</taxon>
        <taxon>Lysobacteraceae</taxon>
        <taxon>Xanthomonas</taxon>
    </lineage>
</organism>
<name>RL17_XANCB</name>
<comment type="subunit">
    <text evidence="1">Part of the 50S ribosomal subunit. Contacts protein L32.</text>
</comment>
<comment type="similarity">
    <text evidence="1">Belongs to the bacterial ribosomal protein bL17 family.</text>
</comment>
<protein>
    <recommendedName>
        <fullName evidence="1">Large ribosomal subunit protein bL17</fullName>
    </recommendedName>
    <alternativeName>
        <fullName evidence="2">50S ribosomal protein L17</fullName>
    </alternativeName>
</protein>
<keyword id="KW-0687">Ribonucleoprotein</keyword>
<keyword id="KW-0689">Ribosomal protein</keyword>
<feature type="chain" id="PRO_1000144506" description="Large ribosomal subunit protein bL17">
    <location>
        <begin position="1"/>
        <end position="127"/>
    </location>
</feature>